<protein>
    <recommendedName>
        <fullName>Enolase</fullName>
        <ecNumber>4.2.1.11</ecNumber>
    </recommendedName>
    <alternativeName>
        <fullName>2-phospho-D-glycerate hydro-lyase</fullName>
    </alternativeName>
    <alternativeName>
        <fullName>2-phosphoglycerate dehydratase</fullName>
    </alternativeName>
</protein>
<proteinExistence type="inferred from homology"/>
<feature type="chain" id="PRO_0000134053" description="Enolase">
    <location>
        <begin position="1"/>
        <end position="436"/>
    </location>
</feature>
<feature type="active site" description="Proton donor" evidence="1">
    <location>
        <position position="211"/>
    </location>
</feature>
<feature type="active site" description="Proton acceptor" evidence="1">
    <location>
        <position position="347"/>
    </location>
</feature>
<feature type="binding site" evidence="1">
    <location>
        <position position="159"/>
    </location>
    <ligand>
        <name>substrate</name>
    </ligand>
</feature>
<feature type="binding site" evidence="1">
    <location>
        <position position="168"/>
    </location>
    <ligand>
        <name>substrate</name>
    </ligand>
</feature>
<feature type="binding site" evidence="1">
    <location>
        <position position="246"/>
    </location>
    <ligand>
        <name>Mg(2+)</name>
        <dbReference type="ChEBI" id="CHEBI:18420"/>
    </ligand>
</feature>
<feature type="binding site" evidence="1">
    <location>
        <position position="295"/>
    </location>
    <ligand>
        <name>Mg(2+)</name>
        <dbReference type="ChEBI" id="CHEBI:18420"/>
    </ligand>
</feature>
<feature type="binding site" evidence="1">
    <location>
        <position position="295"/>
    </location>
    <ligand>
        <name>substrate</name>
    </ligand>
</feature>
<feature type="binding site" evidence="1">
    <location>
        <position position="322"/>
    </location>
    <ligand>
        <name>Mg(2+)</name>
        <dbReference type="ChEBI" id="CHEBI:18420"/>
    </ligand>
</feature>
<feature type="binding site" evidence="1">
    <location>
        <position position="322"/>
    </location>
    <ligand>
        <name>substrate</name>
    </ligand>
</feature>
<feature type="binding site" evidence="1">
    <location>
        <begin position="374"/>
        <end position="377"/>
    </location>
    <ligand>
        <name>substrate</name>
    </ligand>
</feature>
<feature type="binding site" evidence="1">
    <location>
        <position position="398"/>
    </location>
    <ligand>
        <name>substrate</name>
    </ligand>
</feature>
<keyword id="KW-0963">Cytoplasm</keyword>
<keyword id="KW-0324">Glycolysis</keyword>
<keyword id="KW-0456">Lyase</keyword>
<keyword id="KW-0460">Magnesium</keyword>
<keyword id="KW-0479">Metal-binding</keyword>
<dbReference type="EC" id="4.2.1.11"/>
<dbReference type="EMBL" id="X80474">
    <property type="protein sequence ID" value="CAA56645.1"/>
    <property type="molecule type" value="Genomic_DNA"/>
</dbReference>
<dbReference type="SMR" id="P42894"/>
<dbReference type="UniPathway" id="UPA00109">
    <property type="reaction ID" value="UER00187"/>
</dbReference>
<dbReference type="GO" id="GO:0000015">
    <property type="term" value="C:phosphopyruvate hydratase complex"/>
    <property type="evidence" value="ECO:0007669"/>
    <property type="project" value="InterPro"/>
</dbReference>
<dbReference type="GO" id="GO:0000287">
    <property type="term" value="F:magnesium ion binding"/>
    <property type="evidence" value="ECO:0007669"/>
    <property type="project" value="InterPro"/>
</dbReference>
<dbReference type="GO" id="GO:0004634">
    <property type="term" value="F:phosphopyruvate hydratase activity"/>
    <property type="evidence" value="ECO:0007669"/>
    <property type="project" value="UniProtKB-EC"/>
</dbReference>
<dbReference type="GO" id="GO:0006096">
    <property type="term" value="P:glycolytic process"/>
    <property type="evidence" value="ECO:0007669"/>
    <property type="project" value="UniProtKB-UniPathway"/>
</dbReference>
<dbReference type="CDD" id="cd03313">
    <property type="entry name" value="enolase"/>
    <property type="match status" value="1"/>
</dbReference>
<dbReference type="FunFam" id="3.30.390.10:FF:000001">
    <property type="entry name" value="Enolase"/>
    <property type="match status" value="1"/>
</dbReference>
<dbReference type="FunFam" id="3.20.20.120:FF:000002">
    <property type="entry name" value="Enolase 1"/>
    <property type="match status" value="1"/>
</dbReference>
<dbReference type="Gene3D" id="3.20.20.120">
    <property type="entry name" value="Enolase-like C-terminal domain"/>
    <property type="match status" value="1"/>
</dbReference>
<dbReference type="Gene3D" id="3.30.390.10">
    <property type="entry name" value="Enolase-like, N-terminal domain"/>
    <property type="match status" value="1"/>
</dbReference>
<dbReference type="HAMAP" id="MF_00318">
    <property type="entry name" value="Enolase"/>
    <property type="match status" value="1"/>
</dbReference>
<dbReference type="InterPro" id="IPR000941">
    <property type="entry name" value="Enolase"/>
</dbReference>
<dbReference type="InterPro" id="IPR036849">
    <property type="entry name" value="Enolase-like_C_sf"/>
</dbReference>
<dbReference type="InterPro" id="IPR029017">
    <property type="entry name" value="Enolase-like_N"/>
</dbReference>
<dbReference type="InterPro" id="IPR020810">
    <property type="entry name" value="Enolase_C"/>
</dbReference>
<dbReference type="InterPro" id="IPR020809">
    <property type="entry name" value="Enolase_CS"/>
</dbReference>
<dbReference type="InterPro" id="IPR020811">
    <property type="entry name" value="Enolase_N"/>
</dbReference>
<dbReference type="NCBIfam" id="TIGR01060">
    <property type="entry name" value="eno"/>
    <property type="match status" value="1"/>
</dbReference>
<dbReference type="PANTHER" id="PTHR11902">
    <property type="entry name" value="ENOLASE"/>
    <property type="match status" value="1"/>
</dbReference>
<dbReference type="PANTHER" id="PTHR11902:SF1">
    <property type="entry name" value="ENOLASE"/>
    <property type="match status" value="1"/>
</dbReference>
<dbReference type="Pfam" id="PF00113">
    <property type="entry name" value="Enolase_C"/>
    <property type="match status" value="1"/>
</dbReference>
<dbReference type="Pfam" id="PF03952">
    <property type="entry name" value="Enolase_N"/>
    <property type="match status" value="1"/>
</dbReference>
<dbReference type="PIRSF" id="PIRSF001400">
    <property type="entry name" value="Enolase"/>
    <property type="match status" value="1"/>
</dbReference>
<dbReference type="PRINTS" id="PR00148">
    <property type="entry name" value="ENOLASE"/>
</dbReference>
<dbReference type="SFLD" id="SFLDF00002">
    <property type="entry name" value="enolase"/>
    <property type="match status" value="1"/>
</dbReference>
<dbReference type="SFLD" id="SFLDG00178">
    <property type="entry name" value="enolase"/>
    <property type="match status" value="1"/>
</dbReference>
<dbReference type="SMART" id="SM01192">
    <property type="entry name" value="Enolase_C"/>
    <property type="match status" value="1"/>
</dbReference>
<dbReference type="SMART" id="SM01193">
    <property type="entry name" value="Enolase_N"/>
    <property type="match status" value="1"/>
</dbReference>
<dbReference type="SUPFAM" id="SSF51604">
    <property type="entry name" value="Enolase C-terminal domain-like"/>
    <property type="match status" value="1"/>
</dbReference>
<dbReference type="SUPFAM" id="SSF54826">
    <property type="entry name" value="Enolase N-terminal domain-like"/>
    <property type="match status" value="1"/>
</dbReference>
<dbReference type="PROSITE" id="PS00164">
    <property type="entry name" value="ENOLASE"/>
    <property type="match status" value="1"/>
</dbReference>
<reference key="1">
    <citation type="journal article" date="1995" name="Microbiology">
        <title>Neocallimastix frontalis enolase gene, enol: first report of an intron in an anaerobic fungus.</title>
        <authorList>
            <person name="Durand R."/>
            <person name="Fischer M."/>
            <person name="Rascle C."/>
            <person name="Fevre M."/>
        </authorList>
    </citation>
    <scope>NUCLEOTIDE SEQUENCE [GENOMIC DNA]</scope>
    <source>
        <strain>MCH3</strain>
    </source>
</reference>
<organism>
    <name type="scientific">Neocallimastix frontalis</name>
    <name type="common">Rumen fungus</name>
    <dbReference type="NCBI Taxonomy" id="4757"/>
    <lineage>
        <taxon>Eukaryota</taxon>
        <taxon>Fungi</taxon>
        <taxon>Fungi incertae sedis</taxon>
        <taxon>Chytridiomycota</taxon>
        <taxon>Chytridiomycota incertae sedis</taxon>
        <taxon>Neocallimastigomycetes</taxon>
        <taxon>Neocallimastigales</taxon>
        <taxon>Neocallimastigaceae</taxon>
        <taxon>Neocallimastix</taxon>
    </lineage>
</organism>
<sequence>MAITKVHARQIFDSRGNPTVEVEVTTDKGLFRAAVPSGASTGVHEALELRDGIKADYVGKGVLKAVENVNKTIAPALVAANLDVKNQKAVDDFLLKLDGTPNKSKLGANAILGVSLAVARAGAADKGVPLYQHLGELAGNKGPWILPVPSMNVLNGGSHAGNKLAMQEFMILPTGAKSFTEALKMGSEVYHALKSVIKAKYGQDACNVGDEGGFAPNIQDNKEGLELLNEAIAKAGYTGKVKIGMDVASSEFYKDGKYDLDFKNPNSDPSKWISGEELGQFYKEITSEYPIVSIEDPYDQDDFESWSKFRADMQDKIQIVGDDLTVTNPKRIAMAIEKKACNGLLLKVNQIGTVSESIQAALDAFNDGWGVMVSHRSGETEDTFIADLVVGLKSGQIKTGAPCRSERLAKYNQLLRIEEELGANATYAGENFRRPF</sequence>
<accession>P42894</accession>
<evidence type="ECO:0000250" key="1"/>
<evidence type="ECO:0000305" key="2"/>
<name>ENO_NEOFR</name>
<comment type="catalytic activity">
    <reaction>
        <text>(2R)-2-phosphoglycerate = phosphoenolpyruvate + H2O</text>
        <dbReference type="Rhea" id="RHEA:10164"/>
        <dbReference type="ChEBI" id="CHEBI:15377"/>
        <dbReference type="ChEBI" id="CHEBI:58289"/>
        <dbReference type="ChEBI" id="CHEBI:58702"/>
        <dbReference type="EC" id="4.2.1.11"/>
    </reaction>
</comment>
<comment type="cofactor">
    <cofactor evidence="1">
        <name>Mg(2+)</name>
        <dbReference type="ChEBI" id="CHEBI:18420"/>
    </cofactor>
    <text evidence="1">Mg(2+) is required for catalysis and for stabilizing the dimer.</text>
</comment>
<comment type="pathway">
    <text>Carbohydrate degradation; glycolysis; pyruvate from D-glyceraldehyde 3-phosphate: step 4/5.</text>
</comment>
<comment type="subunit">
    <text evidence="1">Homodimer.</text>
</comment>
<comment type="subcellular location">
    <subcellularLocation>
        <location evidence="1">Cytoplasm</location>
    </subcellularLocation>
</comment>
<comment type="similarity">
    <text evidence="2">Belongs to the enolase family.</text>
</comment>